<comment type="function">
    <text evidence="1">Probable serine protease inhibitor.</text>
</comment>
<comment type="subcellular location">
    <subcellularLocation>
        <location evidence="3">Secreted</location>
    </subcellularLocation>
</comment>
<comment type="tissue specificity">
    <text evidence="3">Expressed in hemolymph.</text>
</comment>
<comment type="similarity">
    <text evidence="2">Belongs to the protease inhibitor I19 family.</text>
</comment>
<evidence type="ECO:0000250" key="1">
    <source>
        <dbReference type="UniProtKB" id="O46162"/>
    </source>
</evidence>
<evidence type="ECO:0000255" key="2">
    <source>
        <dbReference type="PROSITE-ProRule" id="PRU00776"/>
    </source>
</evidence>
<evidence type="ECO:0000269" key="3">
    <source ref="1"/>
</evidence>
<evidence type="ECO:0000305" key="4"/>
<accession>B3A0N9</accession>
<proteinExistence type="evidence at protein level"/>
<protein>
    <recommendedName>
        <fullName>Serine protease inhibitor 2</fullName>
    </recommendedName>
    <alternativeName>
        <fullName>Protease inhibitor MSPI-2</fullName>
    </alternativeName>
</protein>
<dbReference type="SMR" id="B3A0N9"/>
<dbReference type="GO" id="GO:0005576">
    <property type="term" value="C:extracellular region"/>
    <property type="evidence" value="ECO:0007669"/>
    <property type="project" value="UniProtKB-SubCell"/>
</dbReference>
<dbReference type="GO" id="GO:0004867">
    <property type="term" value="F:serine-type endopeptidase inhibitor activity"/>
    <property type="evidence" value="ECO:0007669"/>
    <property type="project" value="UniProtKB-KW"/>
</dbReference>
<dbReference type="InterPro" id="IPR008037">
    <property type="entry name" value="Pacifastin_dom"/>
</dbReference>
<dbReference type="InterPro" id="IPR036201">
    <property type="entry name" value="Pacifastin_dom_sf"/>
</dbReference>
<dbReference type="InterPro" id="IPR016307">
    <property type="entry name" value="Prtase-inh_pacifastin"/>
</dbReference>
<dbReference type="Pfam" id="PF05375">
    <property type="entry name" value="Pacifastin_I"/>
    <property type="match status" value="1"/>
</dbReference>
<dbReference type="PIRSF" id="PIRSF001625">
    <property type="entry name" value="Prot_inhib_pacifastin"/>
    <property type="match status" value="1"/>
</dbReference>
<dbReference type="SUPFAM" id="SSF57283">
    <property type="entry name" value="PMP inhibitors"/>
    <property type="match status" value="1"/>
</dbReference>
<dbReference type="PROSITE" id="PS51446">
    <property type="entry name" value="PACIFASTIN"/>
    <property type="match status" value="1"/>
</dbReference>
<keyword id="KW-0903">Direct protein sequencing</keyword>
<keyword id="KW-1015">Disulfide bond</keyword>
<keyword id="KW-0646">Protease inhibitor</keyword>
<keyword id="KW-0964">Secreted</keyword>
<keyword id="KW-0722">Serine protease inhibitor</keyword>
<sequence length="36" mass="3752">EISCEPGTTFQDKCNTCRCGKDGKSAAGCTLKACPQ</sequence>
<reference evidence="4" key="1">
    <citation type="submission" date="2011-10" db="UniProtKB">
        <title>Pacifastin-related serine protease inhibitors of the migratory grasshopper, Melanoplus sanguinipes.</title>
        <authorList>
            <person name="Taub-Montemayor T.E."/>
            <person name="Jones N.T."/>
            <person name="Linse K.D."/>
            <person name="Rankin M.A."/>
        </authorList>
    </citation>
    <scope>PROTEIN SEQUENCE</scope>
    <scope>SUBCELLULAR LOCATION</scope>
    <scope>TISSUE SPECIFICITY</scope>
    <source>
        <tissue evidence="3">Hemolymph</tissue>
    </source>
</reference>
<name>MSPI2_MELSA</name>
<feature type="peptide" id="PRO_0000414707" description="Serine protease inhibitor 2" evidence="3">
    <location>
        <begin position="1"/>
        <end position="36"/>
    </location>
</feature>
<feature type="domain" description="Pacifastin" evidence="2">
    <location>
        <begin position="1"/>
        <end position="36"/>
    </location>
</feature>
<feature type="site" description="Reactive bond" evidence="1 2">
    <location>
        <begin position="31"/>
        <end position="32"/>
    </location>
</feature>
<feature type="disulfide bond" evidence="1 2">
    <location>
        <begin position="4"/>
        <end position="19"/>
    </location>
</feature>
<feature type="disulfide bond" evidence="1 2">
    <location>
        <begin position="14"/>
        <end position="34"/>
    </location>
</feature>
<feature type="disulfide bond" evidence="1 2">
    <location>
        <begin position="17"/>
        <end position="29"/>
    </location>
</feature>
<organism>
    <name type="scientific">Melanoplus sanguinipes</name>
    <name type="common">Migratory grasshopper</name>
    <dbReference type="NCBI Taxonomy" id="65742"/>
    <lineage>
        <taxon>Eukaryota</taxon>
        <taxon>Metazoa</taxon>
        <taxon>Ecdysozoa</taxon>
        <taxon>Arthropoda</taxon>
        <taxon>Hexapoda</taxon>
        <taxon>Insecta</taxon>
        <taxon>Pterygota</taxon>
        <taxon>Neoptera</taxon>
        <taxon>Polyneoptera</taxon>
        <taxon>Orthoptera</taxon>
        <taxon>Caelifera</taxon>
        <taxon>Acrididea</taxon>
        <taxon>Acridomorpha</taxon>
        <taxon>Acridoidea</taxon>
        <taxon>Acrididae</taxon>
        <taxon>Melanoplinae</taxon>
        <taxon>Melanoplini</taxon>
        <taxon>Melanoplus</taxon>
    </lineage>
</organism>